<protein>
    <recommendedName>
        <fullName>Response regulator protein TodT</fullName>
    </recommendedName>
</protein>
<dbReference type="EMBL" id="GQ884177">
    <property type="protein sequence ID" value="ADI95407.1"/>
    <property type="molecule type" value="Genomic_DNA"/>
</dbReference>
<dbReference type="EMBL" id="CP003734">
    <property type="protein sequence ID" value="AFO50106.1"/>
    <property type="status" value="ALT_INIT"/>
    <property type="molecule type" value="Genomic_DNA"/>
</dbReference>
<dbReference type="SMR" id="I7CA98"/>
<dbReference type="DIP" id="DIP-61172N"/>
<dbReference type="IntAct" id="I7CA98">
    <property type="interactions" value="1"/>
</dbReference>
<dbReference type="KEGG" id="ppx:T1E_4277"/>
<dbReference type="PATRIC" id="fig|1196325.3.peg.4234"/>
<dbReference type="HOGENOM" id="CLU_000445_90_4_6"/>
<dbReference type="Proteomes" id="UP000006503">
    <property type="component" value="Chromosome"/>
</dbReference>
<dbReference type="CollecTF" id="EXPREG_000005e0"/>
<dbReference type="GO" id="GO:0005737">
    <property type="term" value="C:cytoplasm"/>
    <property type="evidence" value="ECO:0007669"/>
    <property type="project" value="UniProtKB-SubCell"/>
</dbReference>
<dbReference type="GO" id="GO:0032993">
    <property type="term" value="C:protein-DNA complex"/>
    <property type="evidence" value="ECO:0000315"/>
    <property type="project" value="CollecTF"/>
</dbReference>
<dbReference type="GO" id="GO:0001216">
    <property type="term" value="F:DNA-binding transcription activator activity"/>
    <property type="evidence" value="ECO:0000315"/>
    <property type="project" value="CollecTF"/>
</dbReference>
<dbReference type="GO" id="GO:0000976">
    <property type="term" value="F:transcription cis-regulatory region binding"/>
    <property type="evidence" value="ECO:0000315"/>
    <property type="project" value="CollecTF"/>
</dbReference>
<dbReference type="GO" id="GO:0000160">
    <property type="term" value="P:phosphorelay signal transduction system"/>
    <property type="evidence" value="ECO:0007669"/>
    <property type="project" value="UniProtKB-KW"/>
</dbReference>
<dbReference type="CDD" id="cd06170">
    <property type="entry name" value="LuxR_C_like"/>
    <property type="match status" value="1"/>
</dbReference>
<dbReference type="CDD" id="cd17537">
    <property type="entry name" value="REC_FixJ"/>
    <property type="match status" value="1"/>
</dbReference>
<dbReference type="FunFam" id="3.40.50.2300:FF:000018">
    <property type="entry name" value="DNA-binding transcriptional regulator NtrC"/>
    <property type="match status" value="1"/>
</dbReference>
<dbReference type="FunFam" id="1.10.10.10:FF:000876">
    <property type="entry name" value="Response regulator protein TodT"/>
    <property type="match status" value="1"/>
</dbReference>
<dbReference type="Gene3D" id="3.40.50.2300">
    <property type="match status" value="1"/>
</dbReference>
<dbReference type="Gene3D" id="1.10.10.10">
    <property type="entry name" value="Winged helix-like DNA-binding domain superfamily/Winged helix DNA-binding domain"/>
    <property type="match status" value="1"/>
</dbReference>
<dbReference type="InterPro" id="IPR011006">
    <property type="entry name" value="CheY-like_superfamily"/>
</dbReference>
<dbReference type="InterPro" id="IPR016032">
    <property type="entry name" value="Sig_transdc_resp-reg_C-effctor"/>
</dbReference>
<dbReference type="InterPro" id="IPR001789">
    <property type="entry name" value="Sig_transdc_resp-reg_receiver"/>
</dbReference>
<dbReference type="InterPro" id="IPR000792">
    <property type="entry name" value="Tscrpt_reg_LuxR_C"/>
</dbReference>
<dbReference type="InterPro" id="IPR036388">
    <property type="entry name" value="WH-like_DNA-bd_sf"/>
</dbReference>
<dbReference type="PANTHER" id="PTHR44688">
    <property type="entry name" value="DNA-BINDING TRANSCRIPTIONAL ACTIVATOR DEVR_DOSR"/>
    <property type="match status" value="1"/>
</dbReference>
<dbReference type="PANTHER" id="PTHR44688:SF16">
    <property type="entry name" value="DNA-BINDING TRANSCRIPTIONAL ACTIVATOR DEVR_DOSR"/>
    <property type="match status" value="1"/>
</dbReference>
<dbReference type="Pfam" id="PF00196">
    <property type="entry name" value="GerE"/>
    <property type="match status" value="1"/>
</dbReference>
<dbReference type="Pfam" id="PF00072">
    <property type="entry name" value="Response_reg"/>
    <property type="match status" value="1"/>
</dbReference>
<dbReference type="PRINTS" id="PR00038">
    <property type="entry name" value="HTHLUXR"/>
</dbReference>
<dbReference type="SMART" id="SM00421">
    <property type="entry name" value="HTH_LUXR"/>
    <property type="match status" value="1"/>
</dbReference>
<dbReference type="SMART" id="SM00448">
    <property type="entry name" value="REC"/>
    <property type="match status" value="1"/>
</dbReference>
<dbReference type="SUPFAM" id="SSF46894">
    <property type="entry name" value="C-terminal effector domain of the bipartite response regulators"/>
    <property type="match status" value="1"/>
</dbReference>
<dbReference type="SUPFAM" id="SSF52172">
    <property type="entry name" value="CheY-like"/>
    <property type="match status" value="1"/>
</dbReference>
<dbReference type="PROSITE" id="PS50043">
    <property type="entry name" value="HTH_LUXR_2"/>
    <property type="match status" value="1"/>
</dbReference>
<dbReference type="PROSITE" id="PS50110">
    <property type="entry name" value="RESPONSE_REGULATORY"/>
    <property type="match status" value="1"/>
</dbReference>
<accession>I7CA98</accession>
<accession>O07832</accession>
<evidence type="ECO:0000250" key="1"/>
<evidence type="ECO:0000255" key="2">
    <source>
        <dbReference type="PROSITE-ProRule" id="PRU00169"/>
    </source>
</evidence>
<evidence type="ECO:0000255" key="3">
    <source>
        <dbReference type="PROSITE-ProRule" id="PRU00411"/>
    </source>
</evidence>
<evidence type="ECO:0000269" key="4">
    <source>
    </source>
</evidence>
<evidence type="ECO:0000269" key="5">
    <source>
    </source>
</evidence>
<evidence type="ECO:0000269" key="6">
    <source>
    </source>
</evidence>
<evidence type="ECO:0000269" key="7">
    <source>
    </source>
</evidence>
<evidence type="ECO:0000269" key="8">
    <source>
    </source>
</evidence>
<evidence type="ECO:0000269" key="9">
    <source>
    </source>
</evidence>
<evidence type="ECO:0000305" key="10"/>
<gene>
    <name type="primary">todT</name>
    <name type="synonym">tobT</name>
    <name type="ordered locus">T1E_4277</name>
</gene>
<organism>
    <name type="scientific">Pseudomonas putida (strain DOT-T1E)</name>
    <dbReference type="NCBI Taxonomy" id="1196325"/>
    <lineage>
        <taxon>Bacteria</taxon>
        <taxon>Pseudomonadati</taxon>
        <taxon>Pseudomonadota</taxon>
        <taxon>Gammaproteobacteria</taxon>
        <taxon>Pseudomonadales</taxon>
        <taxon>Pseudomonadaceae</taxon>
        <taxon>Pseudomonas</taxon>
    </lineage>
</organism>
<proteinExistence type="evidence at protein level"/>
<sequence length="227" mass="25432">MPARWGCLFPGKYPCQTGLRHMSDRASVIYILDDDNAVLEALSSLVRSIGLSVECFSSASVFLNDVNRSACGCLILDVRMPEMSGLDVQRQLKELGEQIPIIFISGHGDIPMAVKAIKAGAVDFFTKPFREEELLGAIRAALKLAPQQRSNAPRVSELKENYESLSKREQQVLKFVLRGYLNKQTALELDISEATVKVHRHNIMRKMKVSSIQDLVRVTERLKDSLE</sequence>
<keyword id="KW-0010">Activator</keyword>
<keyword id="KW-0963">Cytoplasm</keyword>
<keyword id="KW-0238">DNA-binding</keyword>
<keyword id="KW-0597">Phosphoprotein</keyword>
<keyword id="KW-0804">Transcription</keyword>
<keyword id="KW-0805">Transcription regulation</keyword>
<keyword id="KW-0902">Two-component regulatory system</keyword>
<feature type="chain" id="PRO_0000423593" description="Response regulator protein TodT">
    <location>
        <begin position="1"/>
        <end position="227"/>
    </location>
</feature>
<feature type="domain" description="Response regulatory" evidence="2">
    <location>
        <begin position="28"/>
        <end position="142"/>
    </location>
</feature>
<feature type="domain" description="HTH luxR-type" evidence="3">
    <location>
        <begin position="158"/>
        <end position="223"/>
    </location>
</feature>
<feature type="DNA-binding region" description="H-T-H motif" evidence="3">
    <location>
        <begin position="182"/>
        <end position="201"/>
    </location>
</feature>
<feature type="modified residue" description="4-aspartylphosphate" evidence="10">
    <location>
        <position position="77"/>
    </location>
</feature>
<feature type="mutagenesis site" description="Lack of phosphorylation." evidence="7">
    <original>D</original>
    <variation>A</variation>
    <location>
        <position position="77"/>
    </location>
</feature>
<reference key="1">
    <citation type="journal article" date="1999" name="Gene">
        <title>Toluene metabolism by the solvent-tolerant Pseudomonas putida DOT-T1 strain, and its role in solvent impermeabilization.</title>
        <authorList>
            <person name="Mosqueda G."/>
            <person name="Ramos-Gonzalez M.I."/>
            <person name="Ramos J.L."/>
        </authorList>
    </citation>
    <scope>NUCLEOTIDE SEQUENCE [GENOMIC DNA]</scope>
    <source>
        <strain>DOT-T1E</strain>
    </source>
</reference>
<reference key="2">
    <citation type="journal article" date="2013" name="Microb. Biotechnol.">
        <title>Metabolic potential of the organic-solvent tolerant Pseudomonas putida DOT-T1E deduced from its annotated genome.</title>
        <authorList>
            <person name="Udaondo Z."/>
            <person name="Molina L."/>
            <person name="Daniels C."/>
            <person name="Gomez M.J."/>
            <person name="Molina-Henares M.A."/>
            <person name="Matilla M.A."/>
            <person name="Roca A."/>
            <person name="Fernandez M."/>
            <person name="Duque E."/>
            <person name="Segura A."/>
            <person name="Ramos J.L."/>
        </authorList>
    </citation>
    <scope>NUCLEOTIDE SEQUENCE [LARGE SCALE GENOMIC DNA]</scope>
    <source>
        <strain>DOT-T1E</strain>
    </source>
</reference>
<reference key="3">
    <citation type="journal article" date="2006" name="Proc. Natl. Acad. Sci. U.S.A.">
        <title>The TodS-TodT two-component regulatory system recognizes a wide range of effectors and works with DNA-bending proteins.</title>
        <authorList>
            <person name="Lacal J."/>
            <person name="Busch A."/>
            <person name="Guazzaroni M.E."/>
            <person name="Krell T."/>
            <person name="Ramos J.L."/>
        </authorList>
    </citation>
    <scope>FUNCTION</scope>
    <scope>DNA-BINDING</scope>
    <scope>ACTIVITY REGULATION</scope>
    <scope>PHOSPHORYLATION</scope>
    <source>
        <strain>DOT-T1E</strain>
    </source>
</reference>
<reference key="4">
    <citation type="journal article" date="2008" name="J. Mol. Biol.">
        <title>Hierarchical binding of the TodT response regulator to its multiple recognition sites at the tod pathway operon promoter.</title>
        <authorList>
            <person name="Lacal J."/>
            <person name="Guazzaroni M.E."/>
            <person name="Busch A."/>
            <person name="Krell T."/>
            <person name="Ramos J.L."/>
        </authorList>
    </citation>
    <scope>FUNCTION</scope>
    <scope>DNA-BINDING</scope>
    <scope>SUBUNIT</scope>
    <source>
        <strain>DOT-T1E</strain>
    </source>
</reference>
<reference key="5">
    <citation type="journal article" date="2008" name="J. Mol. Biol.">
        <title>Two levels of cooperativeness in the binding of TodT to the tod operon promoter.</title>
        <authorList>
            <person name="Lacal J."/>
            <person name="Guazzaroni M.E."/>
            <person name="Gutierrez-del-Arroyo P."/>
            <person name="Busch A."/>
            <person name="Velez M."/>
            <person name="Krell T."/>
            <person name="Ramos J.L."/>
        </authorList>
    </citation>
    <scope>FUNCTION</scope>
    <scope>DNA-BINDING</scope>
    <source>
        <strain>DOT-T1E</strain>
    </source>
</reference>
<reference key="6">
    <citation type="journal article" date="2009" name="J. Biol. Chem.">
        <title>The sensor kinase TodS operates by a multiple step phosphorelay mechanism involving two autokinase domains.</title>
        <authorList>
            <person name="Busch A."/>
            <person name="Guazzaroni M.E."/>
            <person name="Lacal J."/>
            <person name="Ramos J.L."/>
            <person name="Krell T."/>
        </authorList>
    </citation>
    <scope>PHOSPHORYLATION BY TODS</scope>
    <scope>MUTAGENESIS OF ASP-77</scope>
    <source>
        <strain>DOT-T1E</strain>
    </source>
</reference>
<reference key="7">
    <citation type="journal article" date="2010" name="J. Bacteriol.">
        <title>Catabolite repression of the TodS/TodT two-component system and effector-dependent transphosphorylation of TodT as the basis for toluene dioxygenase catabolic pathway control.</title>
        <authorList>
            <person name="Busch A."/>
            <person name="Lacal J."/>
            <person name="Silva-Jimenez H."/>
            <person name="Krell T."/>
            <person name="Ramos J.L."/>
        </authorList>
    </citation>
    <scope>INDUCTION</scope>
    <source>
        <strain>DOT-T1E</strain>
    </source>
</reference>
<reference key="8">
    <citation type="journal article" date="2012" name="Microb. Biotechnol.">
        <title>Study of the TmoS/TmoT two-component system: towards the functional characterization of the family of TodS/TodT like systems.</title>
        <authorList>
            <person name="Silva-Jimenez H."/>
            <person name="Garcia-Fontana C."/>
            <person name="Cadirci B.H."/>
            <person name="Ramos-Gonzalez M.I."/>
            <person name="Ramos J.L."/>
            <person name="Krell T."/>
        </authorList>
    </citation>
    <scope>FUNCTION IN TOLUENE DEGRADATION</scope>
    <source>
        <strain>DOT-T1E</strain>
    </source>
</reference>
<name>TODT_PSEPT</name>
<comment type="function">
    <text evidence="4 5 6 9">Member of the two-component regulatory system TodS/TodT involved in the regulation of toluene degradation. Phosphorylated TodT activates transcription of the tod operon (todXFC1C2BADEGIH). Binds specifically to three boxes in the tod promoter region in a cooperative manner. Boxes-1 and -2 are pseudopalindromes and Box-3 is a half-palindrome.</text>
</comment>
<comment type="activity regulation">
    <text evidence="4">Phosphorylation by TodS probably induces conformational changes, which allow or alter the interaction with RNA polymerase in a process assisted by the integration host factor (IHF).</text>
</comment>
<comment type="subunit">
    <text evidence="5">Monomer.</text>
</comment>
<comment type="subcellular location">
    <subcellularLocation>
        <location evidence="1">Cytoplasm</location>
    </subcellularLocation>
</comment>
<comment type="induction">
    <text evidence="8">Constitutively expressed. Is under catabolite repression.</text>
</comment>
<comment type="PTM">
    <text evidence="4 7">Phosphorylated by TodS.</text>
</comment>
<comment type="sequence caution" evidence="10">
    <conflict type="erroneous initiation">
        <sequence resource="EMBL-CDS" id="AFO50106"/>
    </conflict>
    <text>Truncated N-terminus.</text>
</comment>